<accession>P27670</accession>
<evidence type="ECO:0000250" key="1">
    <source>
        <dbReference type="UniProtKB" id="P0AGC0"/>
    </source>
</evidence>
<evidence type="ECO:0000255" key="2"/>
<evidence type="ECO:0000305" key="3"/>
<dbReference type="EMBL" id="M89480">
    <property type="protein sequence ID" value="AAA27246.1"/>
    <property type="molecule type" value="Genomic_DNA"/>
</dbReference>
<dbReference type="EMBL" id="AE006468">
    <property type="protein sequence ID" value="AAL22645.1"/>
    <property type="molecule type" value="Genomic_DNA"/>
</dbReference>
<dbReference type="PIR" id="D41853">
    <property type="entry name" value="D41853"/>
</dbReference>
<dbReference type="RefSeq" id="NP_462686.1">
    <property type="nucleotide sequence ID" value="NC_003197.2"/>
</dbReference>
<dbReference type="RefSeq" id="WP_000879181.1">
    <property type="nucleotide sequence ID" value="NC_003197.2"/>
</dbReference>
<dbReference type="SMR" id="P27670"/>
<dbReference type="STRING" id="99287.STM3787"/>
<dbReference type="PaxDb" id="99287-STM3787"/>
<dbReference type="GeneID" id="1255311"/>
<dbReference type="KEGG" id="stm:STM3787"/>
<dbReference type="PATRIC" id="fig|99287.12.peg.4007"/>
<dbReference type="HOGENOM" id="CLU_001265_31_0_6"/>
<dbReference type="OMA" id="GTLMWGY"/>
<dbReference type="PhylomeDB" id="P27670"/>
<dbReference type="BioCyc" id="SENT99287:STM3787-MONOMER"/>
<dbReference type="Proteomes" id="UP000001014">
    <property type="component" value="Chromosome"/>
</dbReference>
<dbReference type="GO" id="GO:0005886">
    <property type="term" value="C:plasma membrane"/>
    <property type="evidence" value="ECO:0000318"/>
    <property type="project" value="GO_Central"/>
</dbReference>
<dbReference type="GO" id="GO:0061513">
    <property type="term" value="F:glucose 6-phosphate:phosphate antiporter activity"/>
    <property type="evidence" value="ECO:0000318"/>
    <property type="project" value="GO_Central"/>
</dbReference>
<dbReference type="GO" id="GO:0015760">
    <property type="term" value="P:glucose-6-phosphate transport"/>
    <property type="evidence" value="ECO:0000318"/>
    <property type="project" value="GO_Central"/>
</dbReference>
<dbReference type="GO" id="GO:0035435">
    <property type="term" value="P:phosphate ion transmembrane transport"/>
    <property type="evidence" value="ECO:0000318"/>
    <property type="project" value="GO_Central"/>
</dbReference>
<dbReference type="CDD" id="cd17345">
    <property type="entry name" value="MFS_GlpT"/>
    <property type="match status" value="1"/>
</dbReference>
<dbReference type="FunFam" id="1.20.1250.20:FF:000031">
    <property type="entry name" value="Hexose phosphate transporter"/>
    <property type="match status" value="1"/>
</dbReference>
<dbReference type="FunFam" id="1.20.1250.20:FF:000033">
    <property type="entry name" value="Hexose phosphate transporter"/>
    <property type="match status" value="1"/>
</dbReference>
<dbReference type="Gene3D" id="1.20.1250.20">
    <property type="entry name" value="MFS general substrate transporter like domains"/>
    <property type="match status" value="2"/>
</dbReference>
<dbReference type="InterPro" id="IPR011701">
    <property type="entry name" value="MFS"/>
</dbReference>
<dbReference type="InterPro" id="IPR020846">
    <property type="entry name" value="MFS_dom"/>
</dbReference>
<dbReference type="InterPro" id="IPR036259">
    <property type="entry name" value="MFS_trans_sf"/>
</dbReference>
<dbReference type="InterPro" id="IPR051337">
    <property type="entry name" value="OPA_Antiporter"/>
</dbReference>
<dbReference type="InterPro" id="IPR021159">
    <property type="entry name" value="Sugar-P_transporter_CS"/>
</dbReference>
<dbReference type="InterPro" id="IPR000849">
    <property type="entry name" value="Sugar_P_transporter"/>
</dbReference>
<dbReference type="NCBIfam" id="TIGR00881">
    <property type="entry name" value="2A0104"/>
    <property type="match status" value="1"/>
</dbReference>
<dbReference type="NCBIfam" id="NF007107">
    <property type="entry name" value="PRK09556.1"/>
    <property type="match status" value="1"/>
</dbReference>
<dbReference type="PANTHER" id="PTHR43826">
    <property type="entry name" value="GLUCOSE-6-PHOSPHATE EXCHANGER SLC37A4"/>
    <property type="match status" value="1"/>
</dbReference>
<dbReference type="PANTHER" id="PTHR43826:SF2">
    <property type="entry name" value="HEXOSE-6-PHOSPHATE:PHOSPHATE ANTIPORTER"/>
    <property type="match status" value="1"/>
</dbReference>
<dbReference type="Pfam" id="PF07690">
    <property type="entry name" value="MFS_1"/>
    <property type="match status" value="1"/>
</dbReference>
<dbReference type="PIRSF" id="PIRSF002808">
    <property type="entry name" value="Hexose_phosphate_transp"/>
    <property type="match status" value="1"/>
</dbReference>
<dbReference type="SUPFAM" id="SSF103473">
    <property type="entry name" value="MFS general substrate transporter"/>
    <property type="match status" value="1"/>
</dbReference>
<dbReference type="PROSITE" id="PS00942">
    <property type="entry name" value="GLPT"/>
    <property type="match status" value="1"/>
</dbReference>
<dbReference type="PROSITE" id="PS50850">
    <property type="entry name" value="MFS"/>
    <property type="match status" value="1"/>
</dbReference>
<comment type="function">
    <text evidence="1">Mediates the exchange of external hexose 6-phosphate and internal inorganic phosphate.</text>
</comment>
<comment type="subcellular location">
    <subcellularLocation>
        <location evidence="1">Cell inner membrane</location>
        <topology evidence="2">Multi-pass membrane protein</topology>
    </subcellularLocation>
</comment>
<comment type="induction">
    <text>External glucose-6-phosphate induces the expression of the UHP-region.</text>
</comment>
<comment type="similarity">
    <text evidence="3">Belongs to the major facilitator superfamily. Organophosphate:Pi antiporter (OPA) (TC 2.A.1.4) family.</text>
</comment>
<sequence length="463" mass="50709">MLAFLNQVRKPTLDLPLDVRRKMWFKPFMQSYLVVFIGYLTMYLIRKNFNIAQNDMISTYGLSMTELGMIGLGFSITYGVGKTLVSYYADGKNTKQFLPFMLILSAICMLGFSASMGAGSTSLFLMIAFYALSGFFQSTGGSCSYSTITKWTPRRKRGTFLGFWNISHNLGGAGAAGVALFGANYLFDGHVIGMFIFPSIIALIVGFIGLRFGSDSPESYGLGKAEELFGEEISEEDKETEENEMTKWQIFVEYVLKNKVIWLLCFSNIFLYVVRIGIDQWSTVYAFQELKLSKEVAIQGFTLFEVGALVGTLLWGWLSDLANGRRALVACVALALIIATLGVYQHASNQYVYLASLFALGFLVFGPQLLIGVAAVGFVPKKAIGAADGIKGTFAYLIGDSFAKLGLGMIADGTPVFGLTGWAGTFAALDAAAIGCICLMAMVAVMEERKIRREKKIQQVNIA</sequence>
<organism>
    <name type="scientific">Salmonella typhimurium (strain LT2 / SGSC1412 / ATCC 700720)</name>
    <dbReference type="NCBI Taxonomy" id="99287"/>
    <lineage>
        <taxon>Bacteria</taxon>
        <taxon>Pseudomonadati</taxon>
        <taxon>Pseudomonadota</taxon>
        <taxon>Gammaproteobacteria</taxon>
        <taxon>Enterobacterales</taxon>
        <taxon>Enterobacteriaceae</taxon>
        <taxon>Salmonella</taxon>
    </lineage>
</organism>
<keyword id="KW-0997">Cell inner membrane</keyword>
<keyword id="KW-1003">Cell membrane</keyword>
<keyword id="KW-0472">Membrane</keyword>
<keyword id="KW-0592">Phosphate transport</keyword>
<keyword id="KW-1185">Reference proteome</keyword>
<keyword id="KW-0762">Sugar transport</keyword>
<keyword id="KW-0812">Transmembrane</keyword>
<keyword id="KW-1133">Transmembrane helix</keyword>
<keyword id="KW-0813">Transport</keyword>
<proteinExistence type="evidence at transcript level"/>
<protein>
    <recommendedName>
        <fullName evidence="1">Hexose-6-phosphate:phosphate antiporter</fullName>
    </recommendedName>
</protein>
<name>UHPT_SALTY</name>
<gene>
    <name type="primary">uhpT</name>
    <name type="ordered locus">STM3787</name>
</gene>
<feature type="chain" id="PRO_0000199885" description="Hexose-6-phosphate:phosphate antiporter">
    <location>
        <begin position="1"/>
        <end position="463"/>
    </location>
</feature>
<feature type="topological domain" description="Cytoplasmic" evidence="3">
    <location>
        <begin position="1"/>
        <end position="24"/>
    </location>
</feature>
<feature type="transmembrane region" description="Helical" evidence="2">
    <location>
        <begin position="25"/>
        <end position="45"/>
    </location>
</feature>
<feature type="topological domain" description="Periplasmic" evidence="3">
    <location>
        <begin position="46"/>
        <end position="60"/>
    </location>
</feature>
<feature type="transmembrane region" description="Helical" evidence="2">
    <location>
        <begin position="61"/>
        <end position="81"/>
    </location>
</feature>
<feature type="topological domain" description="Cytoplasmic" evidence="3">
    <location>
        <begin position="82"/>
        <end position="96"/>
    </location>
</feature>
<feature type="transmembrane region" description="Helical" evidence="2">
    <location>
        <begin position="97"/>
        <end position="117"/>
    </location>
</feature>
<feature type="topological domain" description="Periplasmic" evidence="3">
    <location>
        <begin position="118"/>
        <end position="122"/>
    </location>
</feature>
<feature type="transmembrane region" description="Helical" evidence="2">
    <location>
        <begin position="123"/>
        <end position="143"/>
    </location>
</feature>
<feature type="topological domain" description="Cytoplasmic" evidence="3">
    <location>
        <begin position="144"/>
        <end position="159"/>
    </location>
</feature>
<feature type="transmembrane region" description="Helical" evidence="2">
    <location>
        <begin position="160"/>
        <end position="180"/>
    </location>
</feature>
<feature type="topological domain" description="Periplasmic" evidence="3">
    <location>
        <begin position="181"/>
        <end position="189"/>
    </location>
</feature>
<feature type="transmembrane region" description="Helical" evidence="2">
    <location>
        <begin position="190"/>
        <end position="210"/>
    </location>
</feature>
<feature type="topological domain" description="Cytoplasmic" evidence="3">
    <location>
        <begin position="211"/>
        <end position="259"/>
    </location>
</feature>
<feature type="transmembrane region" description="Helical" evidence="2">
    <location>
        <begin position="260"/>
        <end position="280"/>
    </location>
</feature>
<feature type="topological domain" description="Periplasmic" evidence="3">
    <location>
        <begin position="281"/>
        <end position="297"/>
    </location>
</feature>
<feature type="transmembrane region" description="Helical" evidence="2">
    <location>
        <begin position="298"/>
        <end position="318"/>
    </location>
</feature>
<feature type="topological domain" description="Cytoplasmic" evidence="3">
    <location>
        <begin position="319"/>
        <end position="326"/>
    </location>
</feature>
<feature type="transmembrane region" description="Helical" evidence="2">
    <location>
        <begin position="327"/>
        <end position="347"/>
    </location>
</feature>
<feature type="topological domain" description="Periplasmic" evidence="3">
    <location>
        <begin position="348"/>
        <end position="357"/>
    </location>
</feature>
<feature type="transmembrane region" description="Helical" evidence="2">
    <location>
        <begin position="358"/>
        <end position="378"/>
    </location>
</feature>
<feature type="topological domain" description="Cytoplasmic" evidence="3">
    <location>
        <begin position="379"/>
        <end position="382"/>
    </location>
</feature>
<feature type="transmembrane region" description="Helical" evidence="2">
    <location>
        <begin position="383"/>
        <end position="403"/>
    </location>
</feature>
<feature type="topological domain" description="Periplasmic" evidence="3">
    <location>
        <begin position="404"/>
        <end position="425"/>
    </location>
</feature>
<feature type="transmembrane region" description="Helical" evidence="2">
    <location>
        <begin position="426"/>
        <end position="446"/>
    </location>
</feature>
<feature type="topological domain" description="Cytoplasmic" evidence="3">
    <location>
        <begin position="447"/>
        <end position="463"/>
    </location>
</feature>
<feature type="sequence conflict" description="In Ref. 1; AAA27246." evidence="3" ref="1">
    <original>P</original>
    <variation>A</variation>
    <location>
        <position position="16"/>
    </location>
</feature>
<feature type="sequence conflict" description="In Ref. 1; AAA27246." evidence="3" ref="1">
    <original>GA</original>
    <variation>AL</variation>
    <location>
        <begin position="385"/>
        <end position="386"/>
    </location>
</feature>
<feature type="sequence conflict" description="In Ref. 1; AAA27246." evidence="3" ref="1">
    <original>G</original>
    <variation>A</variation>
    <location>
        <position position="413"/>
    </location>
</feature>
<reference key="1">
    <citation type="journal article" date="1992" name="J. Bacteriol.">
        <title>Structure and function of the uhp genes for the sugar phosphate transport system in Escherichia coli and Salmonella typhimurium.</title>
        <authorList>
            <person name="Island M.D."/>
            <person name="Wei B.-Y."/>
            <person name="Kadner R.J."/>
        </authorList>
    </citation>
    <scope>NUCLEOTIDE SEQUENCE [GENOMIC DNA]</scope>
    <source>
        <strain>LT2</strain>
    </source>
</reference>
<reference key="2">
    <citation type="journal article" date="2001" name="Nature">
        <title>Complete genome sequence of Salmonella enterica serovar Typhimurium LT2.</title>
        <authorList>
            <person name="McClelland M."/>
            <person name="Sanderson K.E."/>
            <person name="Spieth J."/>
            <person name="Clifton S.W."/>
            <person name="Latreille P."/>
            <person name="Courtney L."/>
            <person name="Porwollik S."/>
            <person name="Ali J."/>
            <person name="Dante M."/>
            <person name="Du F."/>
            <person name="Hou S."/>
            <person name="Layman D."/>
            <person name="Leonard S."/>
            <person name="Nguyen C."/>
            <person name="Scott K."/>
            <person name="Holmes A."/>
            <person name="Grewal N."/>
            <person name="Mulvaney E."/>
            <person name="Ryan E."/>
            <person name="Sun H."/>
            <person name="Florea L."/>
            <person name="Miller W."/>
            <person name="Stoneking T."/>
            <person name="Nhan M."/>
            <person name="Waterston R."/>
            <person name="Wilson R.K."/>
        </authorList>
    </citation>
    <scope>NUCLEOTIDE SEQUENCE [LARGE SCALE GENOMIC DNA]</scope>
    <source>
        <strain>LT2 / SGSC1412 / ATCC 700720</strain>
    </source>
</reference>